<reference key="1">
    <citation type="journal article" date="1998" name="Biochim. Biophys. Acta">
        <title>Six isoforms of cardiotoxin in malayan spitting cobra (Naja naja sputatrix) venom: cloning and characterization of cDNAs.</title>
        <authorList>
            <person name="Jeyaseelan K."/>
            <person name="Armugam A."/>
            <person name="Lachumanan R."/>
            <person name="Tan C.H."/>
            <person name="Tan N.H."/>
        </authorList>
    </citation>
    <scope>PROTEIN SEQUENCE</scope>
    <scope>SUBCELLULAR LOCATION</scope>
    <source>
        <tissue>Venom</tissue>
    </source>
</reference>
<feature type="chain" id="PRO_0000093521" description="Cytotoxin KJC3" evidence="3">
    <location>
        <begin position="1"/>
        <end position="60"/>
    </location>
</feature>
<feature type="disulfide bond" evidence="1">
    <location>
        <begin position="3"/>
        <end position="21"/>
    </location>
</feature>
<feature type="disulfide bond" evidence="1">
    <location>
        <begin position="14"/>
        <end position="38"/>
    </location>
</feature>
<feature type="disulfide bond" evidence="1">
    <location>
        <begin position="42"/>
        <end position="53"/>
    </location>
</feature>
<feature type="disulfide bond" evidence="1">
    <location>
        <begin position="54"/>
        <end position="59"/>
    </location>
</feature>
<comment type="function">
    <text evidence="1 2">Shows cytolytic activity on many different cells by forming pore in lipid membranes. In vivo, increases heart rate or kills the animal by cardiac arrest. In addition, it binds to heparin with high affinity, interacts with Kv channel-interacting protein 1 (KCNIP1) in a calcium-independent manner, and binds to integrin alpha-V/beta-3 (ITGAV/ITGB3) with moderate affinity.</text>
</comment>
<comment type="subunit">
    <text evidence="1">Monomer in solution; Homodimer and oligomer in the presence of negatively charged lipids forming a pore with a size ranging between 20 and 30 Angstroms.</text>
</comment>
<comment type="subcellular location">
    <subcellularLocation>
        <location evidence="3">Secreted</location>
    </subcellularLocation>
    <subcellularLocation>
        <location evidence="1">Target cell membrane</location>
    </subcellularLocation>
</comment>
<comment type="tissue specificity">
    <text evidence="4">Expressed by the venom gland.</text>
</comment>
<comment type="miscellaneous">
    <text evidence="4">Is classified as a S-type cytotoxin, since a serine residue stands at position 28 (Ser-29 in standard classification).</text>
</comment>
<comment type="similarity">
    <text evidence="4">Belongs to the three-finger toxin family. Short-chain subfamily. Type IA cytotoxin sub-subfamily.</text>
</comment>
<dbReference type="SMR" id="P60311"/>
<dbReference type="GO" id="GO:0005576">
    <property type="term" value="C:extracellular region"/>
    <property type="evidence" value="ECO:0007669"/>
    <property type="project" value="UniProtKB-SubCell"/>
</dbReference>
<dbReference type="GO" id="GO:0016020">
    <property type="term" value="C:membrane"/>
    <property type="evidence" value="ECO:0007669"/>
    <property type="project" value="UniProtKB-KW"/>
</dbReference>
<dbReference type="GO" id="GO:0044218">
    <property type="term" value="C:other organism cell membrane"/>
    <property type="evidence" value="ECO:0007669"/>
    <property type="project" value="UniProtKB-KW"/>
</dbReference>
<dbReference type="GO" id="GO:0090729">
    <property type="term" value="F:toxin activity"/>
    <property type="evidence" value="ECO:0007669"/>
    <property type="project" value="UniProtKB-KW"/>
</dbReference>
<dbReference type="GO" id="GO:0031640">
    <property type="term" value="P:killing of cells of another organism"/>
    <property type="evidence" value="ECO:0007669"/>
    <property type="project" value="UniProtKB-KW"/>
</dbReference>
<dbReference type="CDD" id="cd00206">
    <property type="entry name" value="TFP_snake_toxin"/>
    <property type="match status" value="1"/>
</dbReference>
<dbReference type="FunFam" id="2.10.60.10:FF:000024">
    <property type="entry name" value="Cytotoxin 1"/>
    <property type="match status" value="1"/>
</dbReference>
<dbReference type="Gene3D" id="2.10.60.10">
    <property type="entry name" value="CD59"/>
    <property type="match status" value="1"/>
</dbReference>
<dbReference type="InterPro" id="IPR003572">
    <property type="entry name" value="Cytotoxin_Cobra"/>
</dbReference>
<dbReference type="InterPro" id="IPR003571">
    <property type="entry name" value="Snake_3FTx"/>
</dbReference>
<dbReference type="InterPro" id="IPR045860">
    <property type="entry name" value="Snake_toxin-like_sf"/>
</dbReference>
<dbReference type="InterPro" id="IPR018354">
    <property type="entry name" value="Snake_toxin_con_site"/>
</dbReference>
<dbReference type="InterPro" id="IPR054131">
    <property type="entry name" value="Toxin_cobra-type"/>
</dbReference>
<dbReference type="Pfam" id="PF21947">
    <property type="entry name" value="Toxin_cobra-type"/>
    <property type="match status" value="1"/>
</dbReference>
<dbReference type="PRINTS" id="PR00282">
    <property type="entry name" value="CYTOTOXIN"/>
</dbReference>
<dbReference type="SUPFAM" id="SSF57302">
    <property type="entry name" value="Snake toxin-like"/>
    <property type="match status" value="1"/>
</dbReference>
<dbReference type="PROSITE" id="PS00272">
    <property type="entry name" value="SNAKE_TOXIN"/>
    <property type="match status" value="1"/>
</dbReference>
<evidence type="ECO:0000250" key="1">
    <source>
        <dbReference type="UniProtKB" id="P60301"/>
    </source>
</evidence>
<evidence type="ECO:0000250" key="2">
    <source>
        <dbReference type="UniProtKB" id="P60304"/>
    </source>
</evidence>
<evidence type="ECO:0000269" key="3">
    <source>
    </source>
</evidence>
<evidence type="ECO:0000305" key="4"/>
<keyword id="KW-0123">Cardiotoxin</keyword>
<keyword id="KW-0204">Cytolysis</keyword>
<keyword id="KW-0903">Direct protein sequencing</keyword>
<keyword id="KW-1015">Disulfide bond</keyword>
<keyword id="KW-0472">Membrane</keyword>
<keyword id="KW-0964">Secreted</keyword>
<keyword id="KW-1052">Target cell membrane</keyword>
<keyword id="KW-1053">Target membrane</keyword>
<keyword id="KW-0800">Toxin</keyword>
<accession>P60311</accession>
<organism>
    <name type="scientific">Naja sputatrix</name>
    <name type="common">Malayan spitting cobra</name>
    <name type="synonym">Naja naja sputatrix</name>
    <dbReference type="NCBI Taxonomy" id="33626"/>
    <lineage>
        <taxon>Eukaryota</taxon>
        <taxon>Metazoa</taxon>
        <taxon>Chordata</taxon>
        <taxon>Craniata</taxon>
        <taxon>Vertebrata</taxon>
        <taxon>Euteleostomi</taxon>
        <taxon>Lepidosauria</taxon>
        <taxon>Squamata</taxon>
        <taxon>Bifurcata</taxon>
        <taxon>Unidentata</taxon>
        <taxon>Episquamata</taxon>
        <taxon>Toxicofera</taxon>
        <taxon>Serpentes</taxon>
        <taxon>Colubroidea</taxon>
        <taxon>Elapidae</taxon>
        <taxon>Elapinae</taxon>
        <taxon>Naja</taxon>
    </lineage>
</organism>
<name>3SAC3_NAJSP</name>
<proteinExistence type="evidence at protein level"/>
<sequence length="60" mass="6753">DKCNKLVPLFYKTCPAGKNLCYKMFMVSDLTVPVKRGCIDVCPKNSALVKYVCCNTDRCN</sequence>
<protein>
    <recommendedName>
        <fullName>Cytotoxin KJC3</fullName>
    </recommendedName>
</protein>